<keyword id="KW-0028">Amino-acid biosynthesis</keyword>
<keyword id="KW-0055">Arginine biosynthesis</keyword>
<keyword id="KW-0963">Cytoplasm</keyword>
<keyword id="KW-0238">DNA-binding</keyword>
<keyword id="KW-0678">Repressor</keyword>
<keyword id="KW-0804">Transcription</keyword>
<keyword id="KW-0805">Transcription regulation</keyword>
<accession>A4SEI7</accession>
<protein>
    <recommendedName>
        <fullName evidence="1">Arginine repressor</fullName>
    </recommendedName>
</protein>
<reference key="1">
    <citation type="submission" date="2007-03" db="EMBL/GenBank/DDBJ databases">
        <title>Complete sequence of Prosthecochloris vibrioformis DSM 265.</title>
        <authorList>
            <consortium name="US DOE Joint Genome Institute"/>
            <person name="Copeland A."/>
            <person name="Lucas S."/>
            <person name="Lapidus A."/>
            <person name="Barry K."/>
            <person name="Detter J.C."/>
            <person name="Glavina del Rio T."/>
            <person name="Hammon N."/>
            <person name="Israni S."/>
            <person name="Pitluck S."/>
            <person name="Schmutz J."/>
            <person name="Larimer F."/>
            <person name="Land M."/>
            <person name="Hauser L."/>
            <person name="Mikhailova N."/>
            <person name="Li T."/>
            <person name="Overmann J."/>
            <person name="Schuster S.C."/>
            <person name="Bryant D.A."/>
            <person name="Richardson P."/>
        </authorList>
    </citation>
    <scope>NUCLEOTIDE SEQUENCE [LARGE SCALE GENOMIC DNA]</scope>
    <source>
        <strain>DSM 265 / 1930</strain>
    </source>
</reference>
<comment type="function">
    <text evidence="1">Regulates arginine biosynthesis genes.</text>
</comment>
<comment type="pathway">
    <text>Amino-acid biosynthesis; L-arginine biosynthesis [regulation].</text>
</comment>
<comment type="subcellular location">
    <subcellularLocation>
        <location evidence="1">Cytoplasm</location>
    </subcellularLocation>
</comment>
<comment type="similarity">
    <text evidence="1">Belongs to the ArgR family.</text>
</comment>
<feature type="chain" id="PRO_1000077129" description="Arginine repressor">
    <location>
        <begin position="1"/>
        <end position="148"/>
    </location>
</feature>
<proteinExistence type="inferred from homology"/>
<name>ARGR_CHLPM</name>
<organism>
    <name type="scientific">Chlorobium phaeovibrioides (strain DSM 265 / 1930)</name>
    <name type="common">Prosthecochloris vibrioformis (strain DSM 265)</name>
    <dbReference type="NCBI Taxonomy" id="290318"/>
    <lineage>
        <taxon>Bacteria</taxon>
        <taxon>Pseudomonadati</taxon>
        <taxon>Chlorobiota</taxon>
        <taxon>Chlorobiia</taxon>
        <taxon>Chlorobiales</taxon>
        <taxon>Chlorobiaceae</taxon>
        <taxon>Chlorobium/Pelodictyon group</taxon>
        <taxon>Chlorobium</taxon>
    </lineage>
</organism>
<sequence>MNKPARQLRIREIIQQEHVENQHDLLRLLKEKGVKVAQATLSRDCAELGIIRSKTHAGYRLLFAEEHSGRIIKGLVGMEVVSVAANETSVIVRTLPGRAHGVGSWLDQFHSPLILGTIAGDDTVLVIPDSVENISALISYIHKNLSTN</sequence>
<gene>
    <name evidence="1" type="primary">argR</name>
    <name type="ordered locus">Cvib_0881</name>
</gene>
<dbReference type="EMBL" id="CP000607">
    <property type="protein sequence ID" value="ABP36896.1"/>
    <property type="molecule type" value="Genomic_DNA"/>
</dbReference>
<dbReference type="SMR" id="A4SEI7"/>
<dbReference type="STRING" id="290318.Cvib_0881"/>
<dbReference type="KEGG" id="pvi:Cvib_0881"/>
<dbReference type="eggNOG" id="COG1438">
    <property type="taxonomic scope" value="Bacteria"/>
</dbReference>
<dbReference type="HOGENOM" id="CLU_097103_3_0_10"/>
<dbReference type="OrthoDB" id="9807089at2"/>
<dbReference type="UniPathway" id="UPA00068"/>
<dbReference type="GO" id="GO:0005737">
    <property type="term" value="C:cytoplasm"/>
    <property type="evidence" value="ECO:0007669"/>
    <property type="project" value="UniProtKB-SubCell"/>
</dbReference>
<dbReference type="GO" id="GO:0034618">
    <property type="term" value="F:arginine binding"/>
    <property type="evidence" value="ECO:0007669"/>
    <property type="project" value="InterPro"/>
</dbReference>
<dbReference type="GO" id="GO:0003677">
    <property type="term" value="F:DNA binding"/>
    <property type="evidence" value="ECO:0007669"/>
    <property type="project" value="UniProtKB-KW"/>
</dbReference>
<dbReference type="GO" id="GO:0003700">
    <property type="term" value="F:DNA-binding transcription factor activity"/>
    <property type="evidence" value="ECO:0007669"/>
    <property type="project" value="UniProtKB-UniRule"/>
</dbReference>
<dbReference type="GO" id="GO:0006526">
    <property type="term" value="P:L-arginine biosynthetic process"/>
    <property type="evidence" value="ECO:0007669"/>
    <property type="project" value="UniProtKB-UniPathway"/>
</dbReference>
<dbReference type="GO" id="GO:0051259">
    <property type="term" value="P:protein complex oligomerization"/>
    <property type="evidence" value="ECO:0007669"/>
    <property type="project" value="InterPro"/>
</dbReference>
<dbReference type="GO" id="GO:1900079">
    <property type="term" value="P:regulation of arginine biosynthetic process"/>
    <property type="evidence" value="ECO:0007669"/>
    <property type="project" value="UniProtKB-UniRule"/>
</dbReference>
<dbReference type="Gene3D" id="3.30.1360.40">
    <property type="match status" value="1"/>
</dbReference>
<dbReference type="Gene3D" id="1.10.10.10">
    <property type="entry name" value="Winged helix-like DNA-binding domain superfamily/Winged helix DNA-binding domain"/>
    <property type="match status" value="1"/>
</dbReference>
<dbReference type="HAMAP" id="MF_00173">
    <property type="entry name" value="Arg_repressor"/>
    <property type="match status" value="1"/>
</dbReference>
<dbReference type="InterPro" id="IPR001669">
    <property type="entry name" value="Arg_repress"/>
</dbReference>
<dbReference type="InterPro" id="IPR020899">
    <property type="entry name" value="Arg_repress_C"/>
</dbReference>
<dbReference type="InterPro" id="IPR036251">
    <property type="entry name" value="Arg_repress_C_sf"/>
</dbReference>
<dbReference type="InterPro" id="IPR020900">
    <property type="entry name" value="Arg_repress_DNA-bd"/>
</dbReference>
<dbReference type="InterPro" id="IPR036388">
    <property type="entry name" value="WH-like_DNA-bd_sf"/>
</dbReference>
<dbReference type="InterPro" id="IPR036390">
    <property type="entry name" value="WH_DNA-bd_sf"/>
</dbReference>
<dbReference type="PANTHER" id="PTHR34471">
    <property type="entry name" value="ARGININE REPRESSOR"/>
    <property type="match status" value="1"/>
</dbReference>
<dbReference type="PANTHER" id="PTHR34471:SF1">
    <property type="entry name" value="ARGININE REPRESSOR"/>
    <property type="match status" value="1"/>
</dbReference>
<dbReference type="Pfam" id="PF01316">
    <property type="entry name" value="Arg_repressor"/>
    <property type="match status" value="1"/>
</dbReference>
<dbReference type="Pfam" id="PF02863">
    <property type="entry name" value="Arg_repressor_C"/>
    <property type="match status" value="1"/>
</dbReference>
<dbReference type="PRINTS" id="PR01467">
    <property type="entry name" value="ARGREPRESSOR"/>
</dbReference>
<dbReference type="SUPFAM" id="SSF55252">
    <property type="entry name" value="C-terminal domain of arginine repressor"/>
    <property type="match status" value="1"/>
</dbReference>
<dbReference type="SUPFAM" id="SSF46785">
    <property type="entry name" value="Winged helix' DNA-binding domain"/>
    <property type="match status" value="1"/>
</dbReference>
<evidence type="ECO:0000255" key="1">
    <source>
        <dbReference type="HAMAP-Rule" id="MF_00173"/>
    </source>
</evidence>